<reference key="1">
    <citation type="journal article" date="2009" name="J. Bacteriol.">
        <title>Complete genome sequence and comparative genome analysis of enteropathogenic Escherichia coli O127:H6 strain E2348/69.</title>
        <authorList>
            <person name="Iguchi A."/>
            <person name="Thomson N.R."/>
            <person name="Ogura Y."/>
            <person name="Saunders D."/>
            <person name="Ooka T."/>
            <person name="Henderson I.R."/>
            <person name="Harris D."/>
            <person name="Asadulghani M."/>
            <person name="Kurokawa K."/>
            <person name="Dean P."/>
            <person name="Kenny B."/>
            <person name="Quail M.A."/>
            <person name="Thurston S."/>
            <person name="Dougan G."/>
            <person name="Hayashi T."/>
            <person name="Parkhill J."/>
            <person name="Frankel G."/>
        </authorList>
    </citation>
    <scope>NUCLEOTIDE SEQUENCE [LARGE SCALE GENOMIC DNA]</scope>
    <source>
        <strain>E2348/69 / EPEC</strain>
    </source>
</reference>
<accession>B7UIQ5</accession>
<organism>
    <name type="scientific">Escherichia coli O127:H6 (strain E2348/69 / EPEC)</name>
    <dbReference type="NCBI Taxonomy" id="574521"/>
    <lineage>
        <taxon>Bacteria</taxon>
        <taxon>Pseudomonadati</taxon>
        <taxon>Pseudomonadota</taxon>
        <taxon>Gammaproteobacteria</taxon>
        <taxon>Enterobacterales</taxon>
        <taxon>Enterobacteriaceae</taxon>
        <taxon>Escherichia</taxon>
    </lineage>
</organism>
<dbReference type="EMBL" id="FM180568">
    <property type="protein sequence ID" value="CAS10838.1"/>
    <property type="molecule type" value="Genomic_DNA"/>
</dbReference>
<dbReference type="RefSeq" id="WP_000439331.1">
    <property type="nucleotide sequence ID" value="NC_011601.1"/>
</dbReference>
<dbReference type="KEGG" id="ecg:E2348C_3290"/>
<dbReference type="HOGENOM" id="CLU_097887_1_1_6"/>
<dbReference type="Proteomes" id="UP000008205">
    <property type="component" value="Chromosome"/>
</dbReference>
<dbReference type="GO" id="GO:0005886">
    <property type="term" value="C:plasma membrane"/>
    <property type="evidence" value="ECO:0007669"/>
    <property type="project" value="UniProtKB-SubCell"/>
</dbReference>
<dbReference type="HAMAP" id="MF_00143">
    <property type="entry name" value="UPF0114"/>
    <property type="match status" value="1"/>
</dbReference>
<dbReference type="InterPro" id="IPR005134">
    <property type="entry name" value="UPF0114"/>
</dbReference>
<dbReference type="InterPro" id="IPR020761">
    <property type="entry name" value="UPF0114_bac"/>
</dbReference>
<dbReference type="NCBIfam" id="TIGR00645">
    <property type="entry name" value="HI0507"/>
    <property type="match status" value="1"/>
</dbReference>
<dbReference type="PANTHER" id="PTHR38596">
    <property type="entry name" value="UPF0114 PROTEIN YQHA"/>
    <property type="match status" value="1"/>
</dbReference>
<dbReference type="PANTHER" id="PTHR38596:SF1">
    <property type="entry name" value="UPF0114 PROTEIN YQHA"/>
    <property type="match status" value="1"/>
</dbReference>
<dbReference type="Pfam" id="PF03350">
    <property type="entry name" value="UPF0114"/>
    <property type="match status" value="1"/>
</dbReference>
<sequence>MERFLENAMYASRWLLAPVYFGLSLALVALALKFFQEIIHVLPNIFSMAESDLILVLLSLVDMTLVGGLLVMVMFSGYENFVSQLDISENKEKLNWLGKMDATSLKNKVAASIVAISSIHLLRVFMDAKNVPDNKLMWYVIIHLTFVLSAFVMGYLDRLTRHNH</sequence>
<feature type="chain" id="PRO_1000197569" description="UPF0114 protein YqhA">
    <location>
        <begin position="1"/>
        <end position="164"/>
    </location>
</feature>
<feature type="transmembrane region" description="Helical" evidence="1">
    <location>
        <begin position="15"/>
        <end position="35"/>
    </location>
</feature>
<feature type="transmembrane region" description="Helical" evidence="1">
    <location>
        <begin position="53"/>
        <end position="73"/>
    </location>
</feature>
<feature type="transmembrane region" description="Helical" evidence="1">
    <location>
        <begin position="136"/>
        <end position="156"/>
    </location>
</feature>
<protein>
    <recommendedName>
        <fullName evidence="1">UPF0114 protein YqhA</fullName>
    </recommendedName>
</protein>
<keyword id="KW-1003">Cell membrane</keyword>
<keyword id="KW-0472">Membrane</keyword>
<keyword id="KW-1185">Reference proteome</keyword>
<keyword id="KW-0812">Transmembrane</keyword>
<keyword id="KW-1133">Transmembrane helix</keyword>
<gene>
    <name evidence="1" type="primary">yqhA</name>
    <name type="ordered locus">E2348C_3290</name>
</gene>
<name>YQHA_ECO27</name>
<evidence type="ECO:0000255" key="1">
    <source>
        <dbReference type="HAMAP-Rule" id="MF_00143"/>
    </source>
</evidence>
<proteinExistence type="inferred from homology"/>
<comment type="subcellular location">
    <subcellularLocation>
        <location evidence="1">Cell membrane</location>
        <topology evidence="1">Multi-pass membrane protein</topology>
    </subcellularLocation>
</comment>
<comment type="similarity">
    <text evidence="1">Belongs to the UPF0114 family.</text>
</comment>